<comment type="function">
    <text evidence="1">Probable glycopeptide transferase involved in O-linked oligosaccharide biosynthesis. Glycopeptide transferases catalyze the transfer of an N-acetyl-D-galactosamine residue to an already glycosylated peptide (By similarity). In contrast to other members of the family, it does not act as a peptide transferase that transfers GalNAc onto serine or threonine residue on peptides that have been tested. Some peptide transferase activity is however not excluded, considering that its appropriate peptide substrate may remain unidentified.</text>
</comment>
<comment type="cofactor">
    <cofactor evidence="1">
        <name>Mn(2+)</name>
        <dbReference type="ChEBI" id="CHEBI:29035"/>
    </cofactor>
</comment>
<comment type="pathway">
    <text>Protein modification; protein glycosylation.</text>
</comment>
<comment type="subcellular location">
    <subcellularLocation>
        <location evidence="1">Golgi apparatus membrane</location>
        <topology evidence="1">Single-pass type II membrane protein</topology>
    </subcellularLocation>
</comment>
<comment type="alternative products">
    <event type="alternative splicing"/>
    <isoform>
        <id>O61394-1</id>
        <name>a</name>
        <name>GLY6a</name>
        <name>GLY-6a</name>
        <sequence type="displayed"/>
    </isoform>
    <isoform>
        <id>O61394-2</id>
        <name>b</name>
        <name>GLY6b</name>
        <name>GLY-6b</name>
        <sequence type="described" ref="VSP_011240"/>
    </isoform>
    <isoform>
        <id>O61394-3</id>
        <name>c</name>
        <name>GLY6c</name>
        <name>GLY-6c</name>
        <sequence type="described" ref="VSP_011241"/>
    </isoform>
</comment>
<comment type="domain">
    <text evidence="1">There are two conserved domains in the glycosyltransferase region: the N-terminal domain (domain A, also called GT1 motif), which is probably involved in manganese coordination and substrate binding and the C-terminal domain (domain B, also called Gal/GalNAc-T motif), which is probably involved in catalytic reaction and UDP-Gal binding.</text>
</comment>
<comment type="domain">
    <text evidence="1">The ricin B-type lectin domain binds to GalNAc and contributes to the glycopeptide specificity.</text>
</comment>
<comment type="similarity">
    <text evidence="5">Belongs to the glycosyltransferase 2 family. GalNAc-T subfamily.</text>
</comment>
<gene>
    <name type="primary">gly-6</name>
    <name type="ORF">H38K22.5</name>
</gene>
<feature type="chain" id="PRO_0000059149" description="Probable N-acetylgalactosaminyltransferase 6">
    <location>
        <begin position="1"/>
        <end position="618"/>
    </location>
</feature>
<feature type="topological domain" description="Cytoplasmic" evidence="2">
    <location>
        <begin position="1"/>
        <end position="16"/>
    </location>
</feature>
<feature type="transmembrane region" description="Helical; Signal-anchor for type II membrane protein" evidence="2">
    <location>
        <begin position="17"/>
        <end position="39"/>
    </location>
</feature>
<feature type="topological domain" description="Lumenal" evidence="2">
    <location>
        <begin position="40"/>
        <end position="618"/>
    </location>
</feature>
<feature type="domain" description="Ricin B-type lectin" evidence="3">
    <location>
        <begin position="474"/>
        <end position="609"/>
    </location>
</feature>
<feature type="region of interest" description="Catalytic subdomain A">
    <location>
        <begin position="156"/>
        <end position="267"/>
    </location>
</feature>
<feature type="region of interest" description="Catalytic subdomain B">
    <location>
        <begin position="327"/>
        <end position="389"/>
    </location>
</feature>
<feature type="binding site" evidence="1">
    <location>
        <position position="197"/>
    </location>
    <ligand>
        <name>substrate</name>
    </ligand>
</feature>
<feature type="binding site" evidence="1">
    <location>
        <position position="228"/>
    </location>
    <ligand>
        <name>substrate</name>
    </ligand>
</feature>
<feature type="binding site" evidence="1">
    <location>
        <position position="251"/>
    </location>
    <ligand>
        <name>Mn(2+)</name>
        <dbReference type="ChEBI" id="CHEBI:29035"/>
    </ligand>
</feature>
<feature type="binding site" evidence="1">
    <location>
        <position position="252"/>
    </location>
    <ligand>
        <name>substrate</name>
    </ligand>
</feature>
<feature type="binding site" evidence="1">
    <location>
        <position position="253"/>
    </location>
    <ligand>
        <name>Mn(2+)</name>
        <dbReference type="ChEBI" id="CHEBI:29035"/>
    </ligand>
</feature>
<feature type="binding site" evidence="1">
    <location>
        <position position="358"/>
    </location>
    <ligand>
        <name>substrate</name>
    </ligand>
</feature>
<feature type="binding site" evidence="1">
    <location>
        <position position="386"/>
    </location>
    <ligand>
        <name>Mn(2+)</name>
        <dbReference type="ChEBI" id="CHEBI:29035"/>
    </ligand>
</feature>
<feature type="binding site" evidence="1">
    <location>
        <position position="389"/>
    </location>
    <ligand>
        <name>substrate</name>
    </ligand>
</feature>
<feature type="glycosylation site" description="N-linked (GlcNAc...) asparagine" evidence="2">
    <location>
        <position position="81"/>
    </location>
</feature>
<feature type="glycosylation site" description="N-linked (GlcNAc...) asparagine" evidence="2">
    <location>
        <position position="149"/>
    </location>
</feature>
<feature type="glycosylation site" description="N-linked (GlcNAc...) asparagine" evidence="2">
    <location>
        <position position="483"/>
    </location>
</feature>
<feature type="glycosylation site" description="N-linked (GlcNAc...) asparagine" evidence="2">
    <location>
        <position position="605"/>
    </location>
</feature>
<feature type="disulfide bond" evidence="3">
    <location>
        <begin position="147"/>
        <end position="381"/>
    </location>
</feature>
<feature type="disulfide bond" evidence="3">
    <location>
        <begin position="372"/>
        <end position="452"/>
    </location>
</feature>
<feature type="disulfide bond" evidence="3">
    <location>
        <begin position="487"/>
        <end position="505"/>
    </location>
</feature>
<feature type="disulfide bond" evidence="3">
    <location>
        <begin position="530"/>
        <end position="550"/>
    </location>
</feature>
<feature type="disulfide bond" evidence="3">
    <location>
        <begin position="575"/>
        <end position="597"/>
    </location>
</feature>
<feature type="splice variant" id="VSP_011240" description="In isoform b." evidence="4">
    <original>TSSSNSSVCLAWTLRSSGIKTASTADCLKIFHKT</original>
    <variation>SNSNYCTAFRPGDTGPKNHRLLGSPCTMGFDLW</variation>
    <location>
        <begin position="479"/>
        <end position="512"/>
    </location>
</feature>
<feature type="splice variant" id="VSP_011241" description="In isoform c." evidence="4">
    <original>SGIKTASTADCLKIFHKTQLWLYTGDRRIRTDEHLCLSVVQLLHTTSDWKIQLKECAGFDTEYWDFKPKIGRFQNRKTGLCLASPDIFDPTKDEFNPPIVQKCRSSNDRQNWTITEMSWLPEHP</original>
    <variation>CPTQTTAQPSGQVTRVPKITDCSDHPVLWDSTCGSCGSTLATVEYVQMSIYAYQLFNFFTQLPIGKFN</variation>
    <location>
        <begin position="495"/>
        <end position="618"/>
    </location>
</feature>
<accession>O61394</accession>
<accession>O61395</accession>
<accession>O61396</accession>
<protein>
    <recommendedName>
        <fullName>Probable N-acetylgalactosaminyltransferase 6</fullName>
        <ecNumber>2.4.1.-</ecNumber>
    </recommendedName>
    <alternativeName>
        <fullName>Protein-UDP acetylgalactosaminyltransferase 6</fullName>
    </alternativeName>
    <alternativeName>
        <fullName>UDP-GalNAc:polypeptide N-acetylgalactosaminyltransferase 6</fullName>
        <shortName>pp-GaNTase 6</shortName>
    </alternativeName>
</protein>
<evidence type="ECO:0000250" key="1"/>
<evidence type="ECO:0000255" key="2"/>
<evidence type="ECO:0000255" key="3">
    <source>
        <dbReference type="PROSITE-ProRule" id="PRU00174"/>
    </source>
</evidence>
<evidence type="ECO:0000303" key="4">
    <source>
    </source>
</evidence>
<evidence type="ECO:0000305" key="5"/>
<reference key="1">
    <citation type="journal article" date="1998" name="J. Biol. Chem.">
        <title>cDNA cloning and expression of a family of UDP-N-acetyl-D-galactosamine:polypeptide N-acetylgalactosaminyltransferase sequence homologs from Caenorhabditis elegans.</title>
        <authorList>
            <person name="Hagen F.K."/>
            <person name="Nehrke K."/>
        </authorList>
    </citation>
    <scope>NUCLEOTIDE SEQUENCE [MRNA] (ISOFORMS A; B AND C)</scope>
    <source>
        <strain>Bristol N2</strain>
    </source>
</reference>
<reference key="2">
    <citation type="journal article" date="1998" name="Science">
        <title>Genome sequence of the nematode C. elegans: a platform for investigating biology.</title>
        <authorList>
            <consortium name="The C. elegans sequencing consortium"/>
        </authorList>
    </citation>
    <scope>NUCLEOTIDE SEQUENCE [LARGE SCALE GENOMIC DNA]</scope>
    <source>
        <strain>Bristol N2</strain>
    </source>
</reference>
<organism>
    <name type="scientific">Caenorhabditis elegans</name>
    <dbReference type="NCBI Taxonomy" id="6239"/>
    <lineage>
        <taxon>Eukaryota</taxon>
        <taxon>Metazoa</taxon>
        <taxon>Ecdysozoa</taxon>
        <taxon>Nematoda</taxon>
        <taxon>Chromadorea</taxon>
        <taxon>Rhabditida</taxon>
        <taxon>Rhabditina</taxon>
        <taxon>Rhabditomorpha</taxon>
        <taxon>Rhabditoidea</taxon>
        <taxon>Rhabditidae</taxon>
        <taxon>Peloderinae</taxon>
        <taxon>Caenorhabditis</taxon>
    </lineage>
</organism>
<dbReference type="EC" id="2.4.1.-"/>
<dbReference type="EMBL" id="AF031838">
    <property type="protein sequence ID" value="AAC13674.1"/>
    <property type="molecule type" value="mRNA"/>
</dbReference>
<dbReference type="EMBL" id="AF031839">
    <property type="protein sequence ID" value="AAC13675.1"/>
    <property type="molecule type" value="mRNA"/>
</dbReference>
<dbReference type="EMBL" id="AF031840">
    <property type="protein sequence ID" value="AAC13676.1"/>
    <property type="molecule type" value="mRNA"/>
</dbReference>
<dbReference type="EMBL" id="AL024499">
    <property type="protein sequence ID" value="CAA19707.1"/>
    <property type="molecule type" value="Genomic_DNA"/>
</dbReference>
<dbReference type="EMBL" id="AL024499">
    <property type="protein sequence ID" value="CAC42317.1"/>
    <property type="molecule type" value="Genomic_DNA"/>
</dbReference>
<dbReference type="EMBL" id="AL024499">
    <property type="protein sequence ID" value="CAC42318.1"/>
    <property type="molecule type" value="Genomic_DNA"/>
</dbReference>
<dbReference type="PIR" id="T42248">
    <property type="entry name" value="T42248"/>
</dbReference>
<dbReference type="PIR" id="T42249">
    <property type="entry name" value="T42249"/>
</dbReference>
<dbReference type="PIR" id="T42250">
    <property type="entry name" value="T42250"/>
</dbReference>
<dbReference type="RefSeq" id="NP_001022644.1">
    <molecule id="O61394-1"/>
    <property type="nucleotide sequence ID" value="NM_001027473.5"/>
</dbReference>
<dbReference type="RefSeq" id="NP_001022645.1">
    <property type="nucleotide sequence ID" value="NM_001027474.2"/>
</dbReference>
<dbReference type="RefSeq" id="NP_001022646.1">
    <molecule id="O61394-3"/>
    <property type="nucleotide sequence ID" value="NM_001027475.3"/>
</dbReference>
<dbReference type="RefSeq" id="NP_001370116.1">
    <molecule id="O61394-2"/>
    <property type="nucleotide sequence ID" value="NM_001384070.2"/>
</dbReference>
<dbReference type="SMR" id="O61394"/>
<dbReference type="FunCoup" id="O61394">
    <property type="interactions" value="90"/>
</dbReference>
<dbReference type="STRING" id="6239.H38K22.5a.2"/>
<dbReference type="CAZy" id="CBM13">
    <property type="family name" value="Carbohydrate-Binding Module Family 13"/>
</dbReference>
<dbReference type="CAZy" id="GT27">
    <property type="family name" value="Glycosyltransferase Family 27"/>
</dbReference>
<dbReference type="GlyCosmos" id="O61394">
    <property type="glycosylation" value="4 sites, No reported glycans"/>
</dbReference>
<dbReference type="PaxDb" id="6239-H38K22.5a.1"/>
<dbReference type="EnsemblMetazoa" id="H38K22.5a.1">
    <molecule id="O61394-1"/>
    <property type="protein sequence ID" value="H38K22.5a.1"/>
    <property type="gene ID" value="WBGene00001631"/>
</dbReference>
<dbReference type="EnsemblMetazoa" id="H38K22.5a.2">
    <molecule id="O61394-1"/>
    <property type="protein sequence ID" value="H38K22.5a.2"/>
    <property type="gene ID" value="WBGene00001631"/>
</dbReference>
<dbReference type="EnsemblMetazoa" id="H38K22.5b.1">
    <molecule id="O61394-2"/>
    <property type="protein sequence ID" value="H38K22.5b.1"/>
    <property type="gene ID" value="WBGene00001631"/>
</dbReference>
<dbReference type="EnsemblMetazoa" id="H38K22.5b.2">
    <molecule id="O61394-2"/>
    <property type="protein sequence ID" value="H38K22.5b.2"/>
    <property type="gene ID" value="WBGene00001631"/>
</dbReference>
<dbReference type="EnsemblMetazoa" id="H38K22.5c.1">
    <molecule id="O61394-3"/>
    <property type="protein sequence ID" value="H38K22.5c.1"/>
    <property type="gene ID" value="WBGene00001631"/>
</dbReference>
<dbReference type="GeneID" id="175558"/>
<dbReference type="KEGG" id="cel:CELE_H38K22.5"/>
<dbReference type="UCSC" id="H38K22.5c.1">
    <molecule id="O61394-1"/>
    <property type="organism name" value="c. elegans"/>
</dbReference>
<dbReference type="AGR" id="WB:WBGene00001631"/>
<dbReference type="CTD" id="175558"/>
<dbReference type="WormBase" id="H38K22.5a">
    <molecule id="O61394-1"/>
    <property type="protein sequence ID" value="CE18833"/>
    <property type="gene ID" value="WBGene00001631"/>
    <property type="gene designation" value="gly-6"/>
</dbReference>
<dbReference type="WormBase" id="H38K22.5b">
    <molecule id="O61394-2"/>
    <property type="protein sequence ID" value="CE28040"/>
    <property type="gene ID" value="WBGene00001631"/>
    <property type="gene designation" value="gly-6"/>
</dbReference>
<dbReference type="WormBase" id="H38K22.5c">
    <molecule id="O61394-3"/>
    <property type="protein sequence ID" value="CE28041"/>
    <property type="gene ID" value="WBGene00001631"/>
    <property type="gene designation" value="gly-6"/>
</dbReference>
<dbReference type="eggNOG" id="KOG3736">
    <property type="taxonomic scope" value="Eukaryota"/>
</dbReference>
<dbReference type="InParanoid" id="O61394"/>
<dbReference type="OMA" id="TDEHLCL"/>
<dbReference type="OrthoDB" id="5988548at2759"/>
<dbReference type="PhylomeDB" id="O61394"/>
<dbReference type="Reactome" id="R-CEL-913709">
    <property type="pathway name" value="O-linked glycosylation of mucins"/>
</dbReference>
<dbReference type="UniPathway" id="UPA00378"/>
<dbReference type="PRO" id="PR:O61394"/>
<dbReference type="Proteomes" id="UP000001940">
    <property type="component" value="Chromosome III"/>
</dbReference>
<dbReference type="Bgee" id="WBGene00001631">
    <property type="expression patterns" value="Expressed in larva and 3 other cell types or tissues"/>
</dbReference>
<dbReference type="ExpressionAtlas" id="O61394">
    <property type="expression patterns" value="baseline and differential"/>
</dbReference>
<dbReference type="GO" id="GO:0005794">
    <property type="term" value="C:Golgi apparatus"/>
    <property type="evidence" value="ECO:0000318"/>
    <property type="project" value="GO_Central"/>
</dbReference>
<dbReference type="GO" id="GO:0000139">
    <property type="term" value="C:Golgi membrane"/>
    <property type="evidence" value="ECO:0007669"/>
    <property type="project" value="UniProtKB-SubCell"/>
</dbReference>
<dbReference type="GO" id="GO:0030246">
    <property type="term" value="F:carbohydrate binding"/>
    <property type="evidence" value="ECO:0007669"/>
    <property type="project" value="UniProtKB-KW"/>
</dbReference>
<dbReference type="GO" id="GO:0046872">
    <property type="term" value="F:metal ion binding"/>
    <property type="evidence" value="ECO:0007669"/>
    <property type="project" value="UniProtKB-KW"/>
</dbReference>
<dbReference type="GO" id="GO:0004653">
    <property type="term" value="F:polypeptide N-acetylgalactosaminyltransferase activity"/>
    <property type="evidence" value="ECO:0000318"/>
    <property type="project" value="GO_Central"/>
</dbReference>
<dbReference type="GO" id="GO:0006493">
    <property type="term" value="P:protein O-linked glycosylation"/>
    <property type="evidence" value="ECO:0000318"/>
    <property type="project" value="GO_Central"/>
</dbReference>
<dbReference type="CDD" id="cd23460">
    <property type="entry name" value="beta-trefoil_Ricin_Pgant3-like"/>
    <property type="match status" value="1"/>
</dbReference>
<dbReference type="CDD" id="cd02510">
    <property type="entry name" value="pp-GalNAc-T"/>
    <property type="match status" value="1"/>
</dbReference>
<dbReference type="FunFam" id="2.80.10.50:FF:000116">
    <property type="entry name" value="Polypeptide N-acetylgalactosaminyltransferase"/>
    <property type="match status" value="1"/>
</dbReference>
<dbReference type="FunFam" id="3.90.550.10:FF:000021">
    <property type="entry name" value="Polypeptide N-acetylgalactosaminyltransferase"/>
    <property type="match status" value="1"/>
</dbReference>
<dbReference type="Gene3D" id="2.80.10.50">
    <property type="match status" value="1"/>
</dbReference>
<dbReference type="Gene3D" id="3.90.550.10">
    <property type="entry name" value="Spore Coat Polysaccharide Biosynthesis Protein SpsA, Chain A"/>
    <property type="match status" value="1"/>
</dbReference>
<dbReference type="InterPro" id="IPR045885">
    <property type="entry name" value="GalNAc-T"/>
</dbReference>
<dbReference type="InterPro" id="IPR001173">
    <property type="entry name" value="Glyco_trans_2-like"/>
</dbReference>
<dbReference type="InterPro" id="IPR029044">
    <property type="entry name" value="Nucleotide-diphossugar_trans"/>
</dbReference>
<dbReference type="InterPro" id="IPR035992">
    <property type="entry name" value="Ricin_B-like_lectins"/>
</dbReference>
<dbReference type="InterPro" id="IPR000772">
    <property type="entry name" value="Ricin_B_lectin"/>
</dbReference>
<dbReference type="PANTHER" id="PTHR11675">
    <property type="entry name" value="N-ACETYLGALACTOSAMINYLTRANSFERASE"/>
    <property type="match status" value="1"/>
</dbReference>
<dbReference type="PANTHER" id="PTHR11675:SF118">
    <property type="entry name" value="POLYPEPTIDE N-ACETYLGALACTOSAMINYLTRANSFERASE 3"/>
    <property type="match status" value="1"/>
</dbReference>
<dbReference type="Pfam" id="PF00535">
    <property type="entry name" value="Glycos_transf_2"/>
    <property type="match status" value="1"/>
</dbReference>
<dbReference type="Pfam" id="PF00652">
    <property type="entry name" value="Ricin_B_lectin"/>
    <property type="match status" value="1"/>
</dbReference>
<dbReference type="SMART" id="SM00458">
    <property type="entry name" value="RICIN"/>
    <property type="match status" value="1"/>
</dbReference>
<dbReference type="SUPFAM" id="SSF53448">
    <property type="entry name" value="Nucleotide-diphospho-sugar transferases"/>
    <property type="match status" value="1"/>
</dbReference>
<dbReference type="SUPFAM" id="SSF50370">
    <property type="entry name" value="Ricin B-like lectins"/>
    <property type="match status" value="1"/>
</dbReference>
<dbReference type="PROSITE" id="PS50231">
    <property type="entry name" value="RICIN_B_LECTIN"/>
    <property type="match status" value="1"/>
</dbReference>
<proteinExistence type="evidence at transcript level"/>
<sequence>MIASLIRSRRRSRRCVVYSVFLFGFLALWGSFALALVFLSDMYIGEDQISTQKAIKPIARSNYHVVVGHYNGNLPEDKKRNLTSEELNANLYAPHDDWGEGGAGVSHLTPEQQKLADSTFAVNQFNLLVSDGISVRRSLPEIRKPSCRNMTYPDNLPTTSVIIVYHNEAYSTLLRTVWSVIDRSPKELLKEIILVDDFSDREFLRYPTLDTTLKPLPTDIKIIRSKERVGLIRARMMGAQEAQGDVLTFLDSHCECTKGWLEPLLTRIKLNRKAVPCPVIDIINDNTFQYQKGIEMFRGGFNWNLQFRWYGMPTAMAKQHLLDPTGPIESPTMAGGLFSINRNYFEELGEYDPGMDIWGGENLEMSFRIWQCGGRVEILPCSHVGHVFRKSSPHDFPGKSSGKVLNTNLLRVAEVWMDDWKHYFYKIAPQAHRMRSSIDVSERVELRKKLNCKSFKWYLQNVFQDHFLPTPLDRFGRMTSSSNSSVCLAWTLRSSGIKTASTADCLKIFHKTQLWLYTGDRRIRTDEHLCLSVVQLLHTTSDWKIQLKECAGFDTEYWDFKPKIGRFQNRKTGLCLASPDIFDPTKDEFNPPIVQKCRSSNDRQNWTITEMSWLPEHP</sequence>
<name>GALT6_CAEEL</name>
<keyword id="KW-0025">Alternative splicing</keyword>
<keyword id="KW-1015">Disulfide bond</keyword>
<keyword id="KW-0325">Glycoprotein</keyword>
<keyword id="KW-0328">Glycosyltransferase</keyword>
<keyword id="KW-0333">Golgi apparatus</keyword>
<keyword id="KW-0430">Lectin</keyword>
<keyword id="KW-0464">Manganese</keyword>
<keyword id="KW-0472">Membrane</keyword>
<keyword id="KW-0479">Metal-binding</keyword>
<keyword id="KW-1185">Reference proteome</keyword>
<keyword id="KW-0735">Signal-anchor</keyword>
<keyword id="KW-0808">Transferase</keyword>
<keyword id="KW-0812">Transmembrane</keyword>
<keyword id="KW-1133">Transmembrane helix</keyword>